<reference key="1">
    <citation type="journal article" date="2000" name="Nature">
        <title>Complete genome sequence of Pseudomonas aeruginosa PAO1, an opportunistic pathogen.</title>
        <authorList>
            <person name="Stover C.K."/>
            <person name="Pham X.-Q.T."/>
            <person name="Erwin A.L."/>
            <person name="Mizoguchi S.D."/>
            <person name="Warrener P."/>
            <person name="Hickey M.J."/>
            <person name="Brinkman F.S.L."/>
            <person name="Hufnagle W.O."/>
            <person name="Kowalik D.J."/>
            <person name="Lagrou M."/>
            <person name="Garber R.L."/>
            <person name="Goltry L."/>
            <person name="Tolentino E."/>
            <person name="Westbrock-Wadman S."/>
            <person name="Yuan Y."/>
            <person name="Brody L.L."/>
            <person name="Coulter S.N."/>
            <person name="Folger K.R."/>
            <person name="Kas A."/>
            <person name="Larbig K."/>
            <person name="Lim R.M."/>
            <person name="Smith K.A."/>
            <person name="Spencer D.H."/>
            <person name="Wong G.K.-S."/>
            <person name="Wu Z."/>
            <person name="Paulsen I.T."/>
            <person name="Reizer J."/>
            <person name="Saier M.H. Jr."/>
            <person name="Hancock R.E.W."/>
            <person name="Lory S."/>
            <person name="Olson M.V."/>
        </authorList>
    </citation>
    <scope>NUCLEOTIDE SEQUENCE [LARGE SCALE GENOMIC DNA]</scope>
    <source>
        <strain>ATCC 15692 / DSM 22644 / CIP 104116 / JCM 14847 / LMG 12228 / 1C / PRS 101 / PAO1</strain>
    </source>
</reference>
<accession>Q9I6P3</accession>
<sequence>MTRTVLVLNGPNLNLLGTREPQTYGRRTLGEIADECAAFAETRGFAVDFRQTNQEGQLLDWIHQARGRVAGIVINPAAWTHTSVALRDALAAVELPVVEVHLSNVHQREAFRHHSYVSPVALGVICGFGSLGYRLALEHFAERFEAAA</sequence>
<comment type="function">
    <text evidence="1">Catalyzes a trans-dehydration via an enolate intermediate.</text>
</comment>
<comment type="catalytic activity">
    <reaction>
        <text>3-dehydroquinate = 3-dehydroshikimate + H2O</text>
        <dbReference type="Rhea" id="RHEA:21096"/>
        <dbReference type="ChEBI" id="CHEBI:15377"/>
        <dbReference type="ChEBI" id="CHEBI:16630"/>
        <dbReference type="ChEBI" id="CHEBI:32364"/>
        <dbReference type="EC" id="4.2.1.10"/>
    </reaction>
</comment>
<comment type="pathway">
    <text>Metabolic intermediate biosynthesis; chorismate biosynthesis; chorismate from D-erythrose 4-phosphate and phosphoenolpyruvate: step 3/7.</text>
</comment>
<comment type="subunit">
    <text evidence="1">Homododecamer.</text>
</comment>
<comment type="similarity">
    <text evidence="2">Belongs to the type-II 3-dehydroquinase family.</text>
</comment>
<evidence type="ECO:0000250" key="1"/>
<evidence type="ECO:0000305" key="2"/>
<name>AROQ2_PSEAE</name>
<protein>
    <recommendedName>
        <fullName>3-dehydroquinate dehydratase 2</fullName>
        <shortName>3-dehydroquinase 2</shortName>
        <ecNumber>4.2.1.10</ecNumber>
    </recommendedName>
    <alternativeName>
        <fullName>Type II DHQase 2</fullName>
    </alternativeName>
</protein>
<feature type="chain" id="PRO_0000159919" description="3-dehydroquinate dehydratase 2">
    <location>
        <begin position="1"/>
        <end position="148"/>
    </location>
</feature>
<feature type="active site" description="Proton acceptor" evidence="1">
    <location>
        <position position="24"/>
    </location>
</feature>
<feature type="active site" description="Proton donor" evidence="1">
    <location>
        <position position="101"/>
    </location>
</feature>
<feature type="binding site" evidence="1">
    <location>
        <position position="75"/>
    </location>
    <ligand>
        <name>substrate</name>
    </ligand>
</feature>
<feature type="binding site" evidence="1">
    <location>
        <position position="81"/>
    </location>
    <ligand>
        <name>substrate</name>
    </ligand>
</feature>
<feature type="binding site" evidence="1">
    <location>
        <position position="88"/>
    </location>
    <ligand>
        <name>substrate</name>
    </ligand>
</feature>
<feature type="binding site" evidence="1">
    <location>
        <begin position="102"/>
        <end position="103"/>
    </location>
    <ligand>
        <name>substrate</name>
    </ligand>
</feature>
<feature type="binding site" evidence="1">
    <location>
        <position position="112"/>
    </location>
    <ligand>
        <name>substrate</name>
    </ligand>
</feature>
<feature type="site" description="Transition state stabilizer" evidence="1">
    <location>
        <position position="19"/>
    </location>
</feature>
<keyword id="KW-0028">Amino-acid biosynthesis</keyword>
<keyword id="KW-0057">Aromatic amino acid biosynthesis</keyword>
<keyword id="KW-0456">Lyase</keyword>
<keyword id="KW-1185">Reference proteome</keyword>
<dbReference type="EC" id="4.2.1.10"/>
<dbReference type="EMBL" id="AE004091">
    <property type="protein sequence ID" value="AAG03634.1"/>
    <property type="molecule type" value="Genomic_DNA"/>
</dbReference>
<dbReference type="PIR" id="G83615">
    <property type="entry name" value="G83615"/>
</dbReference>
<dbReference type="RefSeq" id="NP_248936.1">
    <property type="nucleotide sequence ID" value="NC_002516.2"/>
</dbReference>
<dbReference type="SMR" id="Q9I6P3"/>
<dbReference type="STRING" id="208964.PA0245"/>
<dbReference type="PaxDb" id="208964-PA0245"/>
<dbReference type="DNASU" id="882159"/>
<dbReference type="GeneID" id="882159"/>
<dbReference type="KEGG" id="pae:PA0245"/>
<dbReference type="PATRIC" id="fig|208964.12.peg.255"/>
<dbReference type="PseudoCAP" id="PA0245"/>
<dbReference type="HOGENOM" id="CLU_090968_1_0_6"/>
<dbReference type="InParanoid" id="Q9I6P3"/>
<dbReference type="OrthoDB" id="9790793at2"/>
<dbReference type="PhylomeDB" id="Q9I6P3"/>
<dbReference type="BioCyc" id="PAER208964:G1FZ6-247-MONOMER"/>
<dbReference type="UniPathway" id="UPA00053">
    <property type="reaction ID" value="UER00086"/>
</dbReference>
<dbReference type="Proteomes" id="UP000002438">
    <property type="component" value="Chromosome"/>
</dbReference>
<dbReference type="GO" id="GO:0003855">
    <property type="term" value="F:3-dehydroquinate dehydratase activity"/>
    <property type="evidence" value="ECO:0000318"/>
    <property type="project" value="GO_Central"/>
</dbReference>
<dbReference type="GO" id="GO:0008652">
    <property type="term" value="P:amino acid biosynthetic process"/>
    <property type="evidence" value="ECO:0007669"/>
    <property type="project" value="UniProtKB-KW"/>
</dbReference>
<dbReference type="GO" id="GO:0009073">
    <property type="term" value="P:aromatic amino acid family biosynthetic process"/>
    <property type="evidence" value="ECO:0007669"/>
    <property type="project" value="UniProtKB-KW"/>
</dbReference>
<dbReference type="GO" id="GO:0009423">
    <property type="term" value="P:chorismate biosynthetic process"/>
    <property type="evidence" value="ECO:0007669"/>
    <property type="project" value="UniProtKB-UniRule"/>
</dbReference>
<dbReference type="GO" id="GO:0019631">
    <property type="term" value="P:quinate catabolic process"/>
    <property type="evidence" value="ECO:0000318"/>
    <property type="project" value="GO_Central"/>
</dbReference>
<dbReference type="CDD" id="cd00466">
    <property type="entry name" value="DHQase_II"/>
    <property type="match status" value="1"/>
</dbReference>
<dbReference type="Gene3D" id="3.40.50.9100">
    <property type="entry name" value="Dehydroquinase, class II"/>
    <property type="match status" value="1"/>
</dbReference>
<dbReference type="HAMAP" id="MF_00169">
    <property type="entry name" value="AroQ"/>
    <property type="match status" value="1"/>
</dbReference>
<dbReference type="InterPro" id="IPR001874">
    <property type="entry name" value="DHquinase_II"/>
</dbReference>
<dbReference type="InterPro" id="IPR018509">
    <property type="entry name" value="DHquinase_II_CS"/>
</dbReference>
<dbReference type="InterPro" id="IPR036441">
    <property type="entry name" value="DHquinase_II_sf"/>
</dbReference>
<dbReference type="NCBIfam" id="TIGR01088">
    <property type="entry name" value="aroQ"/>
    <property type="match status" value="1"/>
</dbReference>
<dbReference type="NCBIfam" id="NF003804">
    <property type="entry name" value="PRK05395.1-1"/>
    <property type="match status" value="1"/>
</dbReference>
<dbReference type="NCBIfam" id="NF003805">
    <property type="entry name" value="PRK05395.1-2"/>
    <property type="match status" value="1"/>
</dbReference>
<dbReference type="NCBIfam" id="NF003806">
    <property type="entry name" value="PRK05395.1-3"/>
    <property type="match status" value="1"/>
</dbReference>
<dbReference type="NCBIfam" id="NF003807">
    <property type="entry name" value="PRK05395.1-4"/>
    <property type="match status" value="1"/>
</dbReference>
<dbReference type="PANTHER" id="PTHR21272">
    <property type="entry name" value="CATABOLIC 3-DEHYDROQUINASE"/>
    <property type="match status" value="1"/>
</dbReference>
<dbReference type="PANTHER" id="PTHR21272:SF3">
    <property type="entry name" value="CATABOLIC 3-DEHYDROQUINASE"/>
    <property type="match status" value="1"/>
</dbReference>
<dbReference type="Pfam" id="PF01220">
    <property type="entry name" value="DHquinase_II"/>
    <property type="match status" value="1"/>
</dbReference>
<dbReference type="PIRSF" id="PIRSF001399">
    <property type="entry name" value="DHquinase_II"/>
    <property type="match status" value="1"/>
</dbReference>
<dbReference type="SUPFAM" id="SSF52304">
    <property type="entry name" value="Type II 3-dehydroquinate dehydratase"/>
    <property type="match status" value="1"/>
</dbReference>
<dbReference type="PROSITE" id="PS01029">
    <property type="entry name" value="DEHYDROQUINASE_II"/>
    <property type="match status" value="1"/>
</dbReference>
<proteinExistence type="inferred from homology"/>
<gene>
    <name type="primary">aroQ2</name>
    <name type="ordered locus">PA0245</name>
</gene>
<organism>
    <name type="scientific">Pseudomonas aeruginosa (strain ATCC 15692 / DSM 22644 / CIP 104116 / JCM 14847 / LMG 12228 / 1C / PRS 101 / PAO1)</name>
    <dbReference type="NCBI Taxonomy" id="208964"/>
    <lineage>
        <taxon>Bacteria</taxon>
        <taxon>Pseudomonadati</taxon>
        <taxon>Pseudomonadota</taxon>
        <taxon>Gammaproteobacteria</taxon>
        <taxon>Pseudomonadales</taxon>
        <taxon>Pseudomonadaceae</taxon>
        <taxon>Pseudomonas</taxon>
    </lineage>
</organism>